<sequence length="109" mass="11760">MSKSKILVGDVVKVIAGSHKGELGPITWISKDKKWVSVQGINSLKHVKPSQTDSEGGIKEVPSKINLSNVALQDPKNKDGISKVGYQIEDGKKVRIAKKSNSPLKKASK</sequence>
<name>RL24_MESFL</name>
<feature type="chain" id="PRO_1000052245" description="Large ribosomal subunit protein uL24">
    <location>
        <begin position="1"/>
        <end position="109"/>
    </location>
</feature>
<reference key="1">
    <citation type="submission" date="2004-06" db="EMBL/GenBank/DDBJ databases">
        <authorList>
            <person name="Birren B.W."/>
            <person name="Stange-Thomann N."/>
            <person name="Hafez N."/>
            <person name="DeCaprio D."/>
            <person name="Fisher S."/>
            <person name="Butler J."/>
            <person name="Elkins T."/>
            <person name="Kodira C.D."/>
            <person name="Major J."/>
            <person name="Wang S."/>
            <person name="Nicol R."/>
            <person name="Nusbaum C."/>
        </authorList>
    </citation>
    <scope>NUCLEOTIDE SEQUENCE [LARGE SCALE GENOMIC DNA]</scope>
    <source>
        <strain>ATCC 33453 / NBRC 100688 / NCTC 11704 / L1</strain>
    </source>
</reference>
<protein>
    <recommendedName>
        <fullName evidence="1">Large ribosomal subunit protein uL24</fullName>
    </recommendedName>
    <alternativeName>
        <fullName evidence="2">50S ribosomal protein L24</fullName>
    </alternativeName>
</protein>
<keyword id="KW-1185">Reference proteome</keyword>
<keyword id="KW-0687">Ribonucleoprotein</keyword>
<keyword id="KW-0689">Ribosomal protein</keyword>
<keyword id="KW-0694">RNA-binding</keyword>
<keyword id="KW-0699">rRNA-binding</keyword>
<accession>Q6F1Y3</accession>
<evidence type="ECO:0000255" key="1">
    <source>
        <dbReference type="HAMAP-Rule" id="MF_01326"/>
    </source>
</evidence>
<evidence type="ECO:0000305" key="2"/>
<proteinExistence type="inferred from homology"/>
<comment type="function">
    <text evidence="1">One of two assembly initiator proteins, it binds directly to the 5'-end of the 23S rRNA, where it nucleates assembly of the 50S subunit.</text>
</comment>
<comment type="function">
    <text evidence="1">One of the proteins that surrounds the polypeptide exit tunnel on the outside of the subunit.</text>
</comment>
<comment type="subunit">
    <text evidence="1">Part of the 50S ribosomal subunit.</text>
</comment>
<comment type="similarity">
    <text evidence="1">Belongs to the universal ribosomal protein uL24 family.</text>
</comment>
<organism>
    <name type="scientific">Mesoplasma florum (strain ATCC 33453 / NBRC 100688 / NCTC 11704 / L1)</name>
    <name type="common">Acholeplasma florum</name>
    <dbReference type="NCBI Taxonomy" id="265311"/>
    <lineage>
        <taxon>Bacteria</taxon>
        <taxon>Bacillati</taxon>
        <taxon>Mycoplasmatota</taxon>
        <taxon>Mollicutes</taxon>
        <taxon>Entomoplasmatales</taxon>
        <taxon>Entomoplasmataceae</taxon>
        <taxon>Mesoplasma</taxon>
    </lineage>
</organism>
<dbReference type="EMBL" id="AE017263">
    <property type="protein sequence ID" value="AAT75490.1"/>
    <property type="molecule type" value="Genomic_DNA"/>
</dbReference>
<dbReference type="RefSeq" id="WP_011183031.1">
    <property type="nucleotide sequence ID" value="NC_006055.1"/>
</dbReference>
<dbReference type="RefSeq" id="YP_053374.1">
    <property type="nucleotide sequence ID" value="NC_006055.1"/>
</dbReference>
<dbReference type="SMR" id="Q6F1Y3"/>
<dbReference type="STRING" id="265311.Mfl134"/>
<dbReference type="PaxDb" id="265311-Mfl134"/>
<dbReference type="EnsemblBacteria" id="AAT75490">
    <property type="protein sequence ID" value="AAT75490"/>
    <property type="gene ID" value="Mfl134"/>
</dbReference>
<dbReference type="GeneID" id="2897678"/>
<dbReference type="KEGG" id="mfl:Mfl134"/>
<dbReference type="PATRIC" id="fig|265311.5.peg.135"/>
<dbReference type="eggNOG" id="COG0198">
    <property type="taxonomic scope" value="Bacteria"/>
</dbReference>
<dbReference type="HOGENOM" id="CLU_093315_2_2_14"/>
<dbReference type="OrthoDB" id="9807419at2"/>
<dbReference type="Proteomes" id="UP000006647">
    <property type="component" value="Chromosome"/>
</dbReference>
<dbReference type="GO" id="GO:1990904">
    <property type="term" value="C:ribonucleoprotein complex"/>
    <property type="evidence" value="ECO:0007669"/>
    <property type="project" value="UniProtKB-KW"/>
</dbReference>
<dbReference type="GO" id="GO:0005840">
    <property type="term" value="C:ribosome"/>
    <property type="evidence" value="ECO:0007669"/>
    <property type="project" value="UniProtKB-KW"/>
</dbReference>
<dbReference type="GO" id="GO:0019843">
    <property type="term" value="F:rRNA binding"/>
    <property type="evidence" value="ECO:0007669"/>
    <property type="project" value="UniProtKB-UniRule"/>
</dbReference>
<dbReference type="GO" id="GO:0003735">
    <property type="term" value="F:structural constituent of ribosome"/>
    <property type="evidence" value="ECO:0007669"/>
    <property type="project" value="InterPro"/>
</dbReference>
<dbReference type="GO" id="GO:0006412">
    <property type="term" value="P:translation"/>
    <property type="evidence" value="ECO:0007669"/>
    <property type="project" value="UniProtKB-UniRule"/>
</dbReference>
<dbReference type="CDD" id="cd06089">
    <property type="entry name" value="KOW_RPL26"/>
    <property type="match status" value="1"/>
</dbReference>
<dbReference type="Gene3D" id="2.30.30.30">
    <property type="match status" value="1"/>
</dbReference>
<dbReference type="HAMAP" id="MF_01326_B">
    <property type="entry name" value="Ribosomal_uL24_B"/>
    <property type="match status" value="1"/>
</dbReference>
<dbReference type="InterPro" id="IPR005824">
    <property type="entry name" value="KOW"/>
</dbReference>
<dbReference type="InterPro" id="IPR014722">
    <property type="entry name" value="Rib_uL2_dom2"/>
</dbReference>
<dbReference type="InterPro" id="IPR003256">
    <property type="entry name" value="Ribosomal_uL24"/>
</dbReference>
<dbReference type="InterPro" id="IPR005825">
    <property type="entry name" value="Ribosomal_uL24_CS"/>
</dbReference>
<dbReference type="InterPro" id="IPR041988">
    <property type="entry name" value="Ribosomal_uL24_KOW"/>
</dbReference>
<dbReference type="InterPro" id="IPR008991">
    <property type="entry name" value="Translation_prot_SH3-like_sf"/>
</dbReference>
<dbReference type="NCBIfam" id="TIGR01079">
    <property type="entry name" value="rplX_bact"/>
    <property type="match status" value="1"/>
</dbReference>
<dbReference type="PANTHER" id="PTHR12903">
    <property type="entry name" value="MITOCHONDRIAL RIBOSOMAL PROTEIN L24"/>
    <property type="match status" value="1"/>
</dbReference>
<dbReference type="Pfam" id="PF00467">
    <property type="entry name" value="KOW"/>
    <property type="match status" value="1"/>
</dbReference>
<dbReference type="Pfam" id="PF17136">
    <property type="entry name" value="ribosomal_L24"/>
    <property type="match status" value="1"/>
</dbReference>
<dbReference type="SMART" id="SM00739">
    <property type="entry name" value="KOW"/>
    <property type="match status" value="1"/>
</dbReference>
<dbReference type="SUPFAM" id="SSF50104">
    <property type="entry name" value="Translation proteins SH3-like domain"/>
    <property type="match status" value="1"/>
</dbReference>
<dbReference type="PROSITE" id="PS01108">
    <property type="entry name" value="RIBOSOMAL_L24"/>
    <property type="match status" value="1"/>
</dbReference>
<gene>
    <name evidence="1" type="primary">rplX</name>
    <name type="ordered locus">Mfl134</name>
</gene>